<sequence>MSALQWSPHPASLAERLADLAVDALIDEADLSPKPALVDRRGSGAHTDLHLGLMHSSALSLWPTFKWMADAATQFGVVGQPLREALGRLGREGEATMLRTTSGVNTHRGAIWALGLLVTAAALDAQECAPEAICARAGALARIKDRQVLTQNSHGDQVVRRYGVMGAREQAQQGFPAVRLFALPQLQRSRAAGSGEQNARLDALLAIMTTLDDTCVLHRAGIEGLNAMQQGAQRVLYAGGSVSLAGRRALNALDQHLLALNASPGGAADLLAACLFIDGLEPALGPVSRSA</sequence>
<organism>
    <name type="scientific">Pseudomonas syringae pv. syringae (strain B728a)</name>
    <dbReference type="NCBI Taxonomy" id="205918"/>
    <lineage>
        <taxon>Bacteria</taxon>
        <taxon>Pseudomonadati</taxon>
        <taxon>Pseudomonadota</taxon>
        <taxon>Gammaproteobacteria</taxon>
        <taxon>Pseudomonadales</taxon>
        <taxon>Pseudomonadaceae</taxon>
        <taxon>Pseudomonas</taxon>
        <taxon>Pseudomonas syringae</taxon>
    </lineage>
</organism>
<keyword id="KW-0067">ATP-binding</keyword>
<keyword id="KW-0547">Nucleotide-binding</keyword>
<keyword id="KW-0808">Transferase</keyword>
<dbReference type="EC" id="2.4.2.52" evidence="1"/>
<dbReference type="EMBL" id="CP000075">
    <property type="protein sequence ID" value="AAY35513.1"/>
    <property type="molecule type" value="Genomic_DNA"/>
</dbReference>
<dbReference type="RefSeq" id="WP_011266406.1">
    <property type="nucleotide sequence ID" value="NC_007005.1"/>
</dbReference>
<dbReference type="RefSeq" id="YP_233551.1">
    <property type="nucleotide sequence ID" value="NC_007005.1"/>
</dbReference>
<dbReference type="STRING" id="205918.Psyr_0443"/>
<dbReference type="KEGG" id="psb:Psyr_0443"/>
<dbReference type="PATRIC" id="fig|205918.7.peg.460"/>
<dbReference type="eggNOG" id="COG1767">
    <property type="taxonomic scope" value="Bacteria"/>
</dbReference>
<dbReference type="HOGENOM" id="CLU_056179_0_0_6"/>
<dbReference type="OrthoDB" id="114886at2"/>
<dbReference type="Proteomes" id="UP000000426">
    <property type="component" value="Chromosome"/>
</dbReference>
<dbReference type="GO" id="GO:0005524">
    <property type="term" value="F:ATP binding"/>
    <property type="evidence" value="ECO:0007669"/>
    <property type="project" value="UniProtKB-KW"/>
</dbReference>
<dbReference type="GO" id="GO:0046917">
    <property type="term" value="F:triphosphoribosyl-dephospho-CoA synthase activity"/>
    <property type="evidence" value="ECO:0007669"/>
    <property type="project" value="UniProtKB-UniRule"/>
</dbReference>
<dbReference type="GO" id="GO:0051191">
    <property type="term" value="P:prosthetic group biosynthetic process"/>
    <property type="evidence" value="ECO:0007669"/>
    <property type="project" value="TreeGrafter"/>
</dbReference>
<dbReference type="Gene3D" id="1.10.4200.10">
    <property type="entry name" value="Triphosphoribosyl-dephospho-CoA protein"/>
    <property type="match status" value="1"/>
</dbReference>
<dbReference type="HAMAP" id="MF_01883">
    <property type="entry name" value="MdcB"/>
    <property type="match status" value="1"/>
</dbReference>
<dbReference type="InterPro" id="IPR002736">
    <property type="entry name" value="CitG"/>
</dbReference>
<dbReference type="InterPro" id="IPR017555">
    <property type="entry name" value="TriPribosyl-deP-CoA_syn"/>
</dbReference>
<dbReference type="NCBIfam" id="TIGR03132">
    <property type="entry name" value="malonate_mdcB"/>
    <property type="match status" value="1"/>
</dbReference>
<dbReference type="NCBIfam" id="NF002315">
    <property type="entry name" value="PRK01237.1"/>
    <property type="match status" value="1"/>
</dbReference>
<dbReference type="PANTHER" id="PTHR30201:SF2">
    <property type="entry name" value="2-(5''-TRIPHOSPHORIBOSYL)-3'-DEPHOSPHOCOENZYME-A SYNTHASE"/>
    <property type="match status" value="1"/>
</dbReference>
<dbReference type="PANTHER" id="PTHR30201">
    <property type="entry name" value="TRIPHOSPHORIBOSYL-DEPHOSPHO-COA SYNTHASE"/>
    <property type="match status" value="1"/>
</dbReference>
<dbReference type="Pfam" id="PF01874">
    <property type="entry name" value="CitG"/>
    <property type="match status" value="1"/>
</dbReference>
<gene>
    <name evidence="1" type="primary">mdcB</name>
    <name type="ordered locus">Psyr_0443</name>
</gene>
<feature type="chain" id="PRO_0000255405" description="Probable 2-(5''-triphosphoribosyl)-3'-dephosphocoenzyme-A synthase">
    <location>
        <begin position="1"/>
        <end position="291"/>
    </location>
</feature>
<evidence type="ECO:0000255" key="1">
    <source>
        <dbReference type="HAMAP-Rule" id="MF_01883"/>
    </source>
</evidence>
<accession>Q4ZZA9</accession>
<reference key="1">
    <citation type="journal article" date="2005" name="Proc. Natl. Acad. Sci. U.S.A.">
        <title>Comparison of the complete genome sequences of Pseudomonas syringae pv. syringae B728a and pv. tomato DC3000.</title>
        <authorList>
            <person name="Feil H."/>
            <person name="Feil W.S."/>
            <person name="Chain P."/>
            <person name="Larimer F."/>
            <person name="Dibartolo G."/>
            <person name="Copeland A."/>
            <person name="Lykidis A."/>
            <person name="Trong S."/>
            <person name="Nolan M."/>
            <person name="Goltsman E."/>
            <person name="Thiel J."/>
            <person name="Malfatti S."/>
            <person name="Loper J.E."/>
            <person name="Lapidus A."/>
            <person name="Detter J.C."/>
            <person name="Land M."/>
            <person name="Richardson P.M."/>
            <person name="Kyrpides N.C."/>
            <person name="Ivanova N."/>
            <person name="Lindow S.E."/>
        </authorList>
    </citation>
    <scope>NUCLEOTIDE SEQUENCE [LARGE SCALE GENOMIC DNA]</scope>
    <source>
        <strain>B728a</strain>
    </source>
</reference>
<name>MDCB_PSEU2</name>
<proteinExistence type="inferred from homology"/>
<protein>
    <recommendedName>
        <fullName evidence="1">Probable 2-(5''-triphosphoribosyl)-3'-dephosphocoenzyme-A synthase</fullName>
        <shortName evidence="1">2-(5''-triphosphoribosyl)-3'-dephospho-CoA synthase</shortName>
        <ecNumber evidence="1">2.4.2.52</ecNumber>
    </recommendedName>
</protein>
<comment type="function">
    <text evidence="1">Involved in the formation of 2-(5''-phosphoribosyl)-3'-dephosphocoenzyme-A, the prosthetic group of the acyl-carrier protein of the malonate decarboxylase.</text>
</comment>
<comment type="catalytic activity">
    <reaction evidence="1">
        <text>3'-dephospho-CoA + ATP = 2'-(5''-triphospho-alpha-D-ribosyl)-3'-dephospho-CoA + adenine</text>
        <dbReference type="Rhea" id="RHEA:15117"/>
        <dbReference type="ChEBI" id="CHEBI:16708"/>
        <dbReference type="ChEBI" id="CHEBI:30616"/>
        <dbReference type="ChEBI" id="CHEBI:57328"/>
        <dbReference type="ChEBI" id="CHEBI:61378"/>
        <dbReference type="EC" id="2.4.2.52"/>
    </reaction>
</comment>
<comment type="similarity">
    <text evidence="1">Belongs to the CitG/MdcB family.</text>
</comment>